<protein>
    <recommendedName>
        <fullName evidence="1">Urease accessory protein UreG</fullName>
    </recommendedName>
</protein>
<sequence>MGYRDVAKVGLGGPVGSGKTALVQQLVPRLDDAGYDLGVIANDIMTQEDAQRLQSSFAGQIEKDLIAGVETGACPHTGIREDPSMNLDKIDEFSESHPELDVVLIESGGDNLAATFNPELADYFIFVISVAEGDDIPRKRGPGITQADLLVINKTDLAPHVDVSLEVLQEDAMEVRGDNPTAFTNCKTGEGIDDIMDIIERSVLFA</sequence>
<gene>
    <name evidence="1" type="primary">ureG</name>
    <name type="ordered locus">HQ_3628A</name>
</gene>
<proteinExistence type="inferred from homology"/>
<evidence type="ECO:0000255" key="1">
    <source>
        <dbReference type="HAMAP-Rule" id="MF_01389"/>
    </source>
</evidence>
<dbReference type="EMBL" id="AM180088">
    <property type="protein sequence ID" value="CAJ53716.1"/>
    <property type="molecule type" value="Genomic_DNA"/>
</dbReference>
<dbReference type="RefSeq" id="WP_011572798.1">
    <property type="nucleotide sequence ID" value="NC_008212.1"/>
</dbReference>
<dbReference type="SMR" id="Q18EB7"/>
<dbReference type="STRING" id="362976.HQ_3628A"/>
<dbReference type="GeneID" id="4194904"/>
<dbReference type="KEGG" id="hwa:HQ_3628A"/>
<dbReference type="eggNOG" id="arCOG01231">
    <property type="taxonomic scope" value="Archaea"/>
</dbReference>
<dbReference type="HOGENOM" id="CLU_072144_1_0_2"/>
<dbReference type="Proteomes" id="UP000001975">
    <property type="component" value="Chromosome"/>
</dbReference>
<dbReference type="GO" id="GO:0005737">
    <property type="term" value="C:cytoplasm"/>
    <property type="evidence" value="ECO:0007669"/>
    <property type="project" value="UniProtKB-SubCell"/>
</dbReference>
<dbReference type="GO" id="GO:0005525">
    <property type="term" value="F:GTP binding"/>
    <property type="evidence" value="ECO:0007669"/>
    <property type="project" value="UniProtKB-KW"/>
</dbReference>
<dbReference type="GO" id="GO:0003924">
    <property type="term" value="F:GTPase activity"/>
    <property type="evidence" value="ECO:0007669"/>
    <property type="project" value="InterPro"/>
</dbReference>
<dbReference type="GO" id="GO:0016151">
    <property type="term" value="F:nickel cation binding"/>
    <property type="evidence" value="ECO:0007669"/>
    <property type="project" value="UniProtKB-UniRule"/>
</dbReference>
<dbReference type="GO" id="GO:0043419">
    <property type="term" value="P:urea catabolic process"/>
    <property type="evidence" value="ECO:0007669"/>
    <property type="project" value="InterPro"/>
</dbReference>
<dbReference type="Gene3D" id="3.40.50.300">
    <property type="entry name" value="P-loop containing nucleotide triphosphate hydrolases"/>
    <property type="match status" value="1"/>
</dbReference>
<dbReference type="HAMAP" id="MF_01389">
    <property type="entry name" value="UreG"/>
    <property type="match status" value="1"/>
</dbReference>
<dbReference type="InterPro" id="IPR003495">
    <property type="entry name" value="CobW/HypB/UreG_nucleotide-bd"/>
</dbReference>
<dbReference type="InterPro" id="IPR027417">
    <property type="entry name" value="P-loop_NTPase"/>
</dbReference>
<dbReference type="InterPro" id="IPR004400">
    <property type="entry name" value="UreG"/>
</dbReference>
<dbReference type="NCBIfam" id="TIGR00101">
    <property type="entry name" value="ureG"/>
    <property type="match status" value="1"/>
</dbReference>
<dbReference type="PANTHER" id="PTHR31715">
    <property type="entry name" value="UREASE ACCESSORY PROTEIN G"/>
    <property type="match status" value="1"/>
</dbReference>
<dbReference type="PANTHER" id="PTHR31715:SF0">
    <property type="entry name" value="UREASE ACCESSORY PROTEIN G"/>
    <property type="match status" value="1"/>
</dbReference>
<dbReference type="Pfam" id="PF02492">
    <property type="entry name" value="cobW"/>
    <property type="match status" value="1"/>
</dbReference>
<dbReference type="PIRSF" id="PIRSF005624">
    <property type="entry name" value="Ni-bind_GTPase"/>
    <property type="match status" value="1"/>
</dbReference>
<dbReference type="SUPFAM" id="SSF52540">
    <property type="entry name" value="P-loop containing nucleoside triphosphate hydrolases"/>
    <property type="match status" value="1"/>
</dbReference>
<name>UREG_HALWD</name>
<organism>
    <name type="scientific">Haloquadratum walsbyi (strain DSM 16790 / HBSQ001)</name>
    <dbReference type="NCBI Taxonomy" id="362976"/>
    <lineage>
        <taxon>Archaea</taxon>
        <taxon>Methanobacteriati</taxon>
        <taxon>Methanobacteriota</taxon>
        <taxon>Stenosarchaea group</taxon>
        <taxon>Halobacteria</taxon>
        <taxon>Halobacteriales</taxon>
        <taxon>Haloferacaceae</taxon>
        <taxon>Haloquadratum</taxon>
    </lineage>
</organism>
<reference key="1">
    <citation type="journal article" date="2006" name="BMC Genomics">
        <title>The genome of the square archaeon Haloquadratum walsbyi: life at the limits of water activity.</title>
        <authorList>
            <person name="Bolhuis H."/>
            <person name="Palm P."/>
            <person name="Wende A."/>
            <person name="Falb M."/>
            <person name="Rampp M."/>
            <person name="Rodriguez-Valera F."/>
            <person name="Pfeiffer F."/>
            <person name="Oesterhelt D."/>
        </authorList>
    </citation>
    <scope>NUCLEOTIDE SEQUENCE [LARGE SCALE GENOMIC DNA]</scope>
    <source>
        <strain>DSM 16790 / HBSQ001</strain>
    </source>
</reference>
<feature type="chain" id="PRO_0000347460" description="Urease accessory protein UreG">
    <location>
        <begin position="1"/>
        <end position="206"/>
    </location>
</feature>
<feature type="binding site" evidence="1">
    <location>
        <begin position="13"/>
        <end position="20"/>
    </location>
    <ligand>
        <name>GTP</name>
        <dbReference type="ChEBI" id="CHEBI:37565"/>
    </ligand>
</feature>
<comment type="function">
    <text evidence="1">Facilitates the functional incorporation of the urease nickel metallocenter. This process requires GTP hydrolysis, probably effectuated by UreG.</text>
</comment>
<comment type="subunit">
    <text evidence="1">Homodimer. UreD, UreF and UreG form a complex that acts as a GTP-hydrolysis-dependent molecular chaperone, activating the urease apoprotein by helping to assemble the nickel containing metallocenter of UreC. The UreE protein probably delivers the nickel.</text>
</comment>
<comment type="subcellular location">
    <subcellularLocation>
        <location evidence="1">Cytoplasm</location>
    </subcellularLocation>
</comment>
<comment type="similarity">
    <text evidence="1">Belongs to the SIMIBI class G3E GTPase family. UreG subfamily.</text>
</comment>
<keyword id="KW-0143">Chaperone</keyword>
<keyword id="KW-0963">Cytoplasm</keyword>
<keyword id="KW-0342">GTP-binding</keyword>
<keyword id="KW-0996">Nickel insertion</keyword>
<keyword id="KW-0547">Nucleotide-binding</keyword>
<keyword id="KW-1185">Reference proteome</keyword>
<accession>Q18EB7</accession>